<comment type="function">
    <text evidence="1">Catalyzes the reversible conversion of 3-phosphohydroxypyruvate to phosphoserine and of 3-hydroxy-2-oxo-4-phosphonooxybutanoate to phosphohydroxythreonine.</text>
</comment>
<comment type="catalytic activity">
    <reaction evidence="1">
        <text>O-phospho-L-serine + 2-oxoglutarate = 3-phosphooxypyruvate + L-glutamate</text>
        <dbReference type="Rhea" id="RHEA:14329"/>
        <dbReference type="ChEBI" id="CHEBI:16810"/>
        <dbReference type="ChEBI" id="CHEBI:18110"/>
        <dbReference type="ChEBI" id="CHEBI:29985"/>
        <dbReference type="ChEBI" id="CHEBI:57524"/>
        <dbReference type="EC" id="2.6.1.52"/>
    </reaction>
</comment>
<comment type="catalytic activity">
    <reaction evidence="1">
        <text>4-(phosphooxy)-L-threonine + 2-oxoglutarate = (R)-3-hydroxy-2-oxo-4-phosphooxybutanoate + L-glutamate</text>
        <dbReference type="Rhea" id="RHEA:16573"/>
        <dbReference type="ChEBI" id="CHEBI:16810"/>
        <dbReference type="ChEBI" id="CHEBI:29985"/>
        <dbReference type="ChEBI" id="CHEBI:58452"/>
        <dbReference type="ChEBI" id="CHEBI:58538"/>
        <dbReference type="EC" id="2.6.1.52"/>
    </reaction>
</comment>
<comment type="cofactor">
    <cofactor evidence="1">
        <name>pyridoxal 5'-phosphate</name>
        <dbReference type="ChEBI" id="CHEBI:597326"/>
    </cofactor>
    <text evidence="1">Binds 1 pyridoxal phosphate per subunit.</text>
</comment>
<comment type="pathway">
    <text evidence="1">Amino-acid biosynthesis; L-serine biosynthesis; L-serine from 3-phospho-D-glycerate: step 2/3.</text>
</comment>
<comment type="pathway">
    <text evidence="1">Cofactor biosynthesis; pyridoxine 5'-phosphate biosynthesis; pyridoxine 5'-phosphate from D-erythrose 4-phosphate: step 3/5.</text>
</comment>
<comment type="subunit">
    <text evidence="1">Homodimer.</text>
</comment>
<comment type="subcellular location">
    <subcellularLocation>
        <location evidence="1">Cytoplasm</location>
    </subcellularLocation>
</comment>
<comment type="similarity">
    <text evidence="1">Belongs to the class-V pyridoxal-phosphate-dependent aminotransferase family. SerC subfamily.</text>
</comment>
<feature type="chain" id="PRO_1000203529" description="Phosphoserine aminotransferase">
    <location>
        <begin position="1"/>
        <end position="362"/>
    </location>
</feature>
<feature type="binding site" evidence="1">
    <location>
        <position position="9"/>
    </location>
    <ligand>
        <name>L-glutamate</name>
        <dbReference type="ChEBI" id="CHEBI:29985"/>
    </ligand>
</feature>
<feature type="binding site" evidence="1">
    <location>
        <position position="42"/>
    </location>
    <ligand>
        <name>L-glutamate</name>
        <dbReference type="ChEBI" id="CHEBI:29985"/>
    </ligand>
</feature>
<feature type="binding site" evidence="1">
    <location>
        <begin position="76"/>
        <end position="77"/>
    </location>
    <ligand>
        <name>pyridoxal 5'-phosphate</name>
        <dbReference type="ChEBI" id="CHEBI:597326"/>
    </ligand>
</feature>
<feature type="binding site" evidence="1">
    <location>
        <position position="102"/>
    </location>
    <ligand>
        <name>pyridoxal 5'-phosphate</name>
        <dbReference type="ChEBI" id="CHEBI:597326"/>
    </ligand>
</feature>
<feature type="binding site" evidence="1">
    <location>
        <position position="153"/>
    </location>
    <ligand>
        <name>pyridoxal 5'-phosphate</name>
        <dbReference type="ChEBI" id="CHEBI:597326"/>
    </ligand>
</feature>
<feature type="binding site" evidence="1">
    <location>
        <position position="174"/>
    </location>
    <ligand>
        <name>pyridoxal 5'-phosphate</name>
        <dbReference type="ChEBI" id="CHEBI:597326"/>
    </ligand>
</feature>
<feature type="binding site" evidence="1">
    <location>
        <position position="197"/>
    </location>
    <ligand>
        <name>pyridoxal 5'-phosphate</name>
        <dbReference type="ChEBI" id="CHEBI:597326"/>
    </ligand>
</feature>
<feature type="binding site" evidence="1">
    <location>
        <begin position="239"/>
        <end position="240"/>
    </location>
    <ligand>
        <name>pyridoxal 5'-phosphate</name>
        <dbReference type="ChEBI" id="CHEBI:597326"/>
    </ligand>
</feature>
<feature type="modified residue" description="N6-(pyridoxal phosphate)lysine" evidence="1">
    <location>
        <position position="198"/>
    </location>
</feature>
<name>SERC_ECOK1</name>
<accession>A1A9I4</accession>
<reference key="1">
    <citation type="journal article" date="2007" name="J. Bacteriol.">
        <title>The genome sequence of avian pathogenic Escherichia coli strain O1:K1:H7 shares strong similarities with human extraintestinal pathogenic E. coli genomes.</title>
        <authorList>
            <person name="Johnson T.J."/>
            <person name="Kariyawasam S."/>
            <person name="Wannemuehler Y."/>
            <person name="Mangiamele P."/>
            <person name="Johnson S.J."/>
            <person name="Doetkott C."/>
            <person name="Skyberg J.A."/>
            <person name="Lynne A.M."/>
            <person name="Johnson J.R."/>
            <person name="Nolan L.K."/>
        </authorList>
    </citation>
    <scope>NUCLEOTIDE SEQUENCE [LARGE SCALE GENOMIC DNA]</scope>
</reference>
<evidence type="ECO:0000255" key="1">
    <source>
        <dbReference type="HAMAP-Rule" id="MF_00160"/>
    </source>
</evidence>
<protein>
    <recommendedName>
        <fullName evidence="1">Phosphoserine aminotransferase</fullName>
        <ecNumber evidence="1">2.6.1.52</ecNumber>
    </recommendedName>
    <alternativeName>
        <fullName evidence="1">Phosphohydroxythreonine aminotransferase</fullName>
        <shortName evidence="1">PSAT</shortName>
    </alternativeName>
</protein>
<dbReference type="EC" id="2.6.1.52" evidence="1"/>
<dbReference type="EMBL" id="CP000468">
    <property type="protein sequence ID" value="ABJ00324.1"/>
    <property type="molecule type" value="Genomic_DNA"/>
</dbReference>
<dbReference type="RefSeq" id="WP_000057124.1">
    <property type="nucleotide sequence ID" value="NZ_CADILS010000016.1"/>
</dbReference>
<dbReference type="SMR" id="A1A9I4"/>
<dbReference type="KEGG" id="ecv:APECO1_19"/>
<dbReference type="HOGENOM" id="CLU_034866_0_2_6"/>
<dbReference type="UniPathway" id="UPA00135">
    <property type="reaction ID" value="UER00197"/>
</dbReference>
<dbReference type="UniPathway" id="UPA00244">
    <property type="reaction ID" value="UER00311"/>
</dbReference>
<dbReference type="Proteomes" id="UP000008216">
    <property type="component" value="Chromosome"/>
</dbReference>
<dbReference type="GO" id="GO:0005737">
    <property type="term" value="C:cytoplasm"/>
    <property type="evidence" value="ECO:0007669"/>
    <property type="project" value="UniProtKB-SubCell"/>
</dbReference>
<dbReference type="GO" id="GO:0004648">
    <property type="term" value="F:O-phospho-L-serine:2-oxoglutarate aminotransferase activity"/>
    <property type="evidence" value="ECO:0007669"/>
    <property type="project" value="UniProtKB-UniRule"/>
</dbReference>
<dbReference type="GO" id="GO:0030170">
    <property type="term" value="F:pyridoxal phosphate binding"/>
    <property type="evidence" value="ECO:0007669"/>
    <property type="project" value="UniProtKB-UniRule"/>
</dbReference>
<dbReference type="GO" id="GO:0006564">
    <property type="term" value="P:L-serine biosynthetic process"/>
    <property type="evidence" value="ECO:0007669"/>
    <property type="project" value="UniProtKB-UniRule"/>
</dbReference>
<dbReference type="GO" id="GO:0008615">
    <property type="term" value="P:pyridoxine biosynthetic process"/>
    <property type="evidence" value="ECO:0007669"/>
    <property type="project" value="UniProtKB-UniRule"/>
</dbReference>
<dbReference type="CDD" id="cd00611">
    <property type="entry name" value="PSAT_like"/>
    <property type="match status" value="1"/>
</dbReference>
<dbReference type="FunFam" id="3.40.640.10:FF:000010">
    <property type="entry name" value="Phosphoserine aminotransferase"/>
    <property type="match status" value="1"/>
</dbReference>
<dbReference type="FunFam" id="3.90.1150.10:FF:000006">
    <property type="entry name" value="Phosphoserine aminotransferase"/>
    <property type="match status" value="1"/>
</dbReference>
<dbReference type="Gene3D" id="3.90.1150.10">
    <property type="entry name" value="Aspartate Aminotransferase, domain 1"/>
    <property type="match status" value="1"/>
</dbReference>
<dbReference type="Gene3D" id="3.40.640.10">
    <property type="entry name" value="Type I PLP-dependent aspartate aminotransferase-like (Major domain)"/>
    <property type="match status" value="1"/>
</dbReference>
<dbReference type="HAMAP" id="MF_00160">
    <property type="entry name" value="SerC_aminotrans_5"/>
    <property type="match status" value="1"/>
</dbReference>
<dbReference type="InterPro" id="IPR000192">
    <property type="entry name" value="Aminotrans_V_dom"/>
</dbReference>
<dbReference type="InterPro" id="IPR020578">
    <property type="entry name" value="Aminotrans_V_PyrdxlP_BS"/>
</dbReference>
<dbReference type="InterPro" id="IPR022278">
    <property type="entry name" value="Pser_aminoTfrase"/>
</dbReference>
<dbReference type="InterPro" id="IPR015424">
    <property type="entry name" value="PyrdxlP-dep_Trfase"/>
</dbReference>
<dbReference type="InterPro" id="IPR015421">
    <property type="entry name" value="PyrdxlP-dep_Trfase_major"/>
</dbReference>
<dbReference type="InterPro" id="IPR015422">
    <property type="entry name" value="PyrdxlP-dep_Trfase_small"/>
</dbReference>
<dbReference type="NCBIfam" id="NF003764">
    <property type="entry name" value="PRK05355.1"/>
    <property type="match status" value="1"/>
</dbReference>
<dbReference type="NCBIfam" id="TIGR01364">
    <property type="entry name" value="serC_1"/>
    <property type="match status" value="1"/>
</dbReference>
<dbReference type="PANTHER" id="PTHR43247">
    <property type="entry name" value="PHOSPHOSERINE AMINOTRANSFERASE"/>
    <property type="match status" value="1"/>
</dbReference>
<dbReference type="PANTHER" id="PTHR43247:SF1">
    <property type="entry name" value="PHOSPHOSERINE AMINOTRANSFERASE"/>
    <property type="match status" value="1"/>
</dbReference>
<dbReference type="Pfam" id="PF00266">
    <property type="entry name" value="Aminotran_5"/>
    <property type="match status" value="1"/>
</dbReference>
<dbReference type="PIRSF" id="PIRSF000525">
    <property type="entry name" value="SerC"/>
    <property type="match status" value="1"/>
</dbReference>
<dbReference type="SUPFAM" id="SSF53383">
    <property type="entry name" value="PLP-dependent transferases"/>
    <property type="match status" value="1"/>
</dbReference>
<dbReference type="PROSITE" id="PS00595">
    <property type="entry name" value="AA_TRANSFER_CLASS_5"/>
    <property type="match status" value="1"/>
</dbReference>
<proteinExistence type="inferred from homology"/>
<organism>
    <name type="scientific">Escherichia coli O1:K1 / APEC</name>
    <dbReference type="NCBI Taxonomy" id="405955"/>
    <lineage>
        <taxon>Bacteria</taxon>
        <taxon>Pseudomonadati</taxon>
        <taxon>Pseudomonadota</taxon>
        <taxon>Gammaproteobacteria</taxon>
        <taxon>Enterobacterales</taxon>
        <taxon>Enterobacteriaceae</taxon>
        <taxon>Escherichia</taxon>
    </lineage>
</organism>
<keyword id="KW-0028">Amino-acid biosynthesis</keyword>
<keyword id="KW-0032">Aminotransferase</keyword>
<keyword id="KW-0963">Cytoplasm</keyword>
<keyword id="KW-0663">Pyridoxal phosphate</keyword>
<keyword id="KW-0664">Pyridoxine biosynthesis</keyword>
<keyword id="KW-1185">Reference proteome</keyword>
<keyword id="KW-0718">Serine biosynthesis</keyword>
<keyword id="KW-0808">Transferase</keyword>
<sequence>MAQIFNFSSGPAMLPAEVLEQAQQELRDWNGLGTSVMEVSHRGKEFIQVAEEAEKDFRDLLNVPSNYKVLFCHGGGRGQFAAVPLNILGDKTTADYVDAGYWAASAIKEAKKYCTPNVFDAKVTVDGLRAVKPMSEWQLSDNAAYMHYCPNETIDGIAIDETPDFGKDVVVAADFSSTILSRPIDVSRYGVIYAGAQKNIGPAGLTIVIVREDLLGKANIACPSILDYSILNDNDSMFNTPPTFAWYLSGLVFKWLKANGGVAAMDKINQQKAELLYGVIDNSDFYRNDVAKANRSRMNVPFQLADSALDKLFLEESFAAGLHALKGHRVVGGMRASIYNAMPLEGVKALTDFMVEFERRHG</sequence>
<gene>
    <name evidence="1" type="primary">serC</name>
    <name type="ordered locus">Ecok1_08300</name>
    <name type="ORF">APECO1_19</name>
</gene>